<accession>B2TYR0</accession>
<comment type="function">
    <text evidence="1">Sequence-specific endonuclease that cleaves unmethylated GATC sequences. It is involved in DNA mismatch repair.</text>
</comment>
<comment type="subcellular location">
    <subcellularLocation>
        <location evidence="1">Cytoplasm</location>
    </subcellularLocation>
</comment>
<comment type="similarity">
    <text evidence="1">Belongs to the MutH family.</text>
</comment>
<dbReference type="EMBL" id="CP001063">
    <property type="protein sequence ID" value="ACD06432.1"/>
    <property type="molecule type" value="Genomic_DNA"/>
</dbReference>
<dbReference type="RefSeq" id="WP_000082195.1">
    <property type="nucleotide sequence ID" value="NC_010658.1"/>
</dbReference>
<dbReference type="SMR" id="B2TYR0"/>
<dbReference type="STRING" id="344609.SbBS512_E3031"/>
<dbReference type="KEGG" id="sbc:SbBS512_E3031"/>
<dbReference type="HOGENOM" id="CLU_086669_0_0_6"/>
<dbReference type="Proteomes" id="UP000001030">
    <property type="component" value="Chromosome"/>
</dbReference>
<dbReference type="GO" id="GO:0005737">
    <property type="term" value="C:cytoplasm"/>
    <property type="evidence" value="ECO:0007669"/>
    <property type="project" value="UniProtKB-SubCell"/>
</dbReference>
<dbReference type="GO" id="GO:0003677">
    <property type="term" value="F:DNA binding"/>
    <property type="evidence" value="ECO:0007669"/>
    <property type="project" value="InterPro"/>
</dbReference>
<dbReference type="GO" id="GO:0004519">
    <property type="term" value="F:endonuclease activity"/>
    <property type="evidence" value="ECO:0007669"/>
    <property type="project" value="UniProtKB-UniRule"/>
</dbReference>
<dbReference type="GO" id="GO:0006304">
    <property type="term" value="P:DNA modification"/>
    <property type="evidence" value="ECO:0007669"/>
    <property type="project" value="InterPro"/>
</dbReference>
<dbReference type="GO" id="GO:0006298">
    <property type="term" value="P:mismatch repair"/>
    <property type="evidence" value="ECO:0007669"/>
    <property type="project" value="UniProtKB-UniRule"/>
</dbReference>
<dbReference type="CDD" id="cd00583">
    <property type="entry name" value="MutH-like"/>
    <property type="match status" value="1"/>
</dbReference>
<dbReference type="FunFam" id="3.40.600.10:FF:000001">
    <property type="entry name" value="DNA mismatch repair protein MutH"/>
    <property type="match status" value="1"/>
</dbReference>
<dbReference type="Gene3D" id="3.40.600.10">
    <property type="entry name" value="DNA mismatch repair MutH/Restriction endonuclease, type II"/>
    <property type="match status" value="1"/>
</dbReference>
<dbReference type="HAMAP" id="MF_00759">
    <property type="entry name" value="MutH"/>
    <property type="match status" value="1"/>
</dbReference>
<dbReference type="InterPro" id="IPR004230">
    <property type="entry name" value="DNA_mismatch_repair_MutH"/>
</dbReference>
<dbReference type="InterPro" id="IPR011337">
    <property type="entry name" value="DNA_rep_MutH/RE_typeII_Sau3AI"/>
</dbReference>
<dbReference type="InterPro" id="IPR037057">
    <property type="entry name" value="DNA_rep_MutH/T2_RE_sf"/>
</dbReference>
<dbReference type="InterPro" id="IPR011335">
    <property type="entry name" value="Restrct_endonuc-II-like"/>
</dbReference>
<dbReference type="NCBIfam" id="TIGR02248">
    <property type="entry name" value="mutH_TIGR"/>
    <property type="match status" value="1"/>
</dbReference>
<dbReference type="NCBIfam" id="NF003458">
    <property type="entry name" value="PRK05070.1"/>
    <property type="match status" value="1"/>
</dbReference>
<dbReference type="Pfam" id="PF02976">
    <property type="entry name" value="MutH"/>
    <property type="match status" value="1"/>
</dbReference>
<dbReference type="SMART" id="SM00927">
    <property type="entry name" value="MutH"/>
    <property type="match status" value="1"/>
</dbReference>
<dbReference type="SUPFAM" id="SSF52980">
    <property type="entry name" value="Restriction endonuclease-like"/>
    <property type="match status" value="1"/>
</dbReference>
<protein>
    <recommendedName>
        <fullName evidence="1">DNA mismatch repair protein MutH</fullName>
    </recommendedName>
    <alternativeName>
        <fullName evidence="1">Methyl-directed mismatch repair protein</fullName>
    </alternativeName>
</protein>
<sequence length="229" mass="25513">MSQPRPLLSPPETEEQLLAQAQQLSGYTLGELAALAGLVTPENLKRDKGWIGVLLEIWLGASAGSKPEQDFAALGVELKTIPVDSLGRPLETTFVCVAPLTGNSGVTWETSHVRHKLKRVLWIPVEGERSIPLAQRRVGSPLLWTPNEEEDRQLREDWEELMDMIVLGQVERITARHGEYLQIRPKAANAKALTEAIGARGERILTLPRGFYLKKNFTSALLARHFLIQ</sequence>
<name>MUTH_SHIB3</name>
<proteinExistence type="inferred from homology"/>
<reference key="1">
    <citation type="submission" date="2008-05" db="EMBL/GenBank/DDBJ databases">
        <title>Complete sequence of Shigella boydii serotype 18 strain BS512.</title>
        <authorList>
            <person name="Rasko D.A."/>
            <person name="Rosovitz M."/>
            <person name="Maurelli A.T."/>
            <person name="Myers G."/>
            <person name="Seshadri R."/>
            <person name="Cer R."/>
            <person name="Jiang L."/>
            <person name="Ravel J."/>
            <person name="Sebastian Y."/>
        </authorList>
    </citation>
    <scope>NUCLEOTIDE SEQUENCE [LARGE SCALE GENOMIC DNA]</scope>
    <source>
        <strain>CDC 3083-94 / BS512</strain>
    </source>
</reference>
<gene>
    <name evidence="1" type="primary">mutH</name>
    <name type="ordered locus">SbBS512_E3031</name>
</gene>
<feature type="chain" id="PRO_1000133478" description="DNA mismatch repair protein MutH">
    <location>
        <begin position="1"/>
        <end position="229"/>
    </location>
</feature>
<organism>
    <name type="scientific">Shigella boydii serotype 18 (strain CDC 3083-94 / BS512)</name>
    <dbReference type="NCBI Taxonomy" id="344609"/>
    <lineage>
        <taxon>Bacteria</taxon>
        <taxon>Pseudomonadati</taxon>
        <taxon>Pseudomonadota</taxon>
        <taxon>Gammaproteobacteria</taxon>
        <taxon>Enterobacterales</taxon>
        <taxon>Enterobacteriaceae</taxon>
        <taxon>Shigella</taxon>
    </lineage>
</organism>
<keyword id="KW-0963">Cytoplasm</keyword>
<keyword id="KW-0227">DNA damage</keyword>
<keyword id="KW-0234">DNA repair</keyword>
<keyword id="KW-0255">Endonuclease</keyword>
<keyword id="KW-0378">Hydrolase</keyword>
<keyword id="KW-0540">Nuclease</keyword>
<keyword id="KW-1185">Reference proteome</keyword>
<evidence type="ECO:0000255" key="1">
    <source>
        <dbReference type="HAMAP-Rule" id="MF_00759"/>
    </source>
</evidence>